<keyword id="KW-0274">FAD</keyword>
<keyword id="KW-0285">Flavoprotein</keyword>
<keyword id="KW-0560">Oxidoreductase</keyword>
<keyword id="KW-0816">Tricarboxylic acid cycle</keyword>
<proteinExistence type="inferred from homology"/>
<evidence type="ECO:0000255" key="1">
    <source>
        <dbReference type="HAMAP-Rule" id="MF_00212"/>
    </source>
</evidence>
<reference key="1">
    <citation type="journal article" date="2007" name="Genes Dev.">
        <title>New insights into Acinetobacter baumannii pathogenesis revealed by high-density pyrosequencing and transposon mutagenesis.</title>
        <authorList>
            <person name="Smith M.G."/>
            <person name="Gianoulis T.A."/>
            <person name="Pukatzki S."/>
            <person name="Mekalanos J.J."/>
            <person name="Ornston L.N."/>
            <person name="Gerstein M."/>
            <person name="Snyder M."/>
        </authorList>
    </citation>
    <scope>NUCLEOTIDE SEQUENCE [LARGE SCALE GENOMIC DNA]</scope>
    <source>
        <strain>ATCC 17978 / DSM 105126 / CIP 53.77 / LMG 1025 / NCDC KC755 / 5377</strain>
    </source>
</reference>
<sequence length="546" mass="60435">MKKFLKYLLVLIILILIAGIVFLFRPIASKQVQTAKDEPVVDAVLVGGGIMSATLGTYFTELEPNWQIRMFERLDQVAQESSNGFNNAGTGHSGFMEMNYTEEKNGKMEIAKAEKVASQFEVAKQFWSYQVKQGVLAEPKTFINPVPHIAFVWGDNVKFLEKRYAAMIQSPLFKGMKFTEDPAVIKQWAPLVMTDRDPTQKVAATRMEVGSDVNYGSITKQLVNHLNQNPNFKLQTSTEVTGISQNDDKTWTVSFKNLKTGKTDHVKTRFVFIGAGGAAVKLLQLTGLPEAKQYAGFPVGGEFLITDNPAITAQHTAKVYGRAELGAPPMSVPHIDTRYIDGKKYVLFGPFATYSNKFLKNGSQLDLLASTNKSNVLPMTTVGLENLDLVKYLVSQVMMSDEDRLNELRKYYPDAKAEDWRLSQGGQRVQIIKKEPGKPATLQFGTEIFASKDGAVTALLGASPGASTSPYIMLNLLEKAFPQQTEGKWNQKLHEIVVSYKQDLSKDPVLLDKVRQYTSSTLGLNYTSPFKAANDETAAAPVAKAN</sequence>
<accession>A3M361</accession>
<feature type="chain" id="PRO_1000099864" description="Probable malate:quinone oxidoreductase">
    <location>
        <begin position="1"/>
        <end position="546"/>
    </location>
</feature>
<protein>
    <recommendedName>
        <fullName evidence="1">Probable malate:quinone oxidoreductase</fullName>
        <ecNumber evidence="1">1.1.5.4</ecNumber>
    </recommendedName>
    <alternativeName>
        <fullName evidence="1">MQO</fullName>
    </alternativeName>
    <alternativeName>
        <fullName evidence="1">Malate dehydrogenase [quinone]</fullName>
    </alternativeName>
</protein>
<comment type="catalytic activity">
    <reaction evidence="1">
        <text>(S)-malate + a quinone = a quinol + oxaloacetate</text>
        <dbReference type="Rhea" id="RHEA:46012"/>
        <dbReference type="ChEBI" id="CHEBI:15589"/>
        <dbReference type="ChEBI" id="CHEBI:16452"/>
        <dbReference type="ChEBI" id="CHEBI:24646"/>
        <dbReference type="ChEBI" id="CHEBI:132124"/>
        <dbReference type="EC" id="1.1.5.4"/>
    </reaction>
</comment>
<comment type="cofactor">
    <cofactor evidence="1">
        <name>FAD</name>
        <dbReference type="ChEBI" id="CHEBI:57692"/>
    </cofactor>
</comment>
<comment type="pathway">
    <text evidence="1">Carbohydrate metabolism; tricarboxylic acid cycle; oxaloacetate from (S)-malate (quinone route): step 1/1.</text>
</comment>
<comment type="similarity">
    <text evidence="1">Belongs to the MQO family.</text>
</comment>
<gene>
    <name evidence="1" type="primary">mqo</name>
    <name type="ordered locus">A1S_0923</name>
</gene>
<name>MQO_ACIBT</name>
<dbReference type="EC" id="1.1.5.4" evidence="1"/>
<dbReference type="EMBL" id="CP000521">
    <property type="protein sequence ID" value="ABO11355.2"/>
    <property type="molecule type" value="Genomic_DNA"/>
</dbReference>
<dbReference type="RefSeq" id="WP_000714073.1">
    <property type="nucleotide sequence ID" value="NZ_CP053098.1"/>
</dbReference>
<dbReference type="SMR" id="A3M361"/>
<dbReference type="KEGG" id="acb:A1S_0923"/>
<dbReference type="HOGENOM" id="CLU_028151_0_0_6"/>
<dbReference type="UniPathway" id="UPA00223">
    <property type="reaction ID" value="UER01008"/>
</dbReference>
<dbReference type="GO" id="GO:0047545">
    <property type="term" value="F:2-hydroxyglutarate dehydrogenase activity"/>
    <property type="evidence" value="ECO:0007669"/>
    <property type="project" value="TreeGrafter"/>
</dbReference>
<dbReference type="GO" id="GO:0008924">
    <property type="term" value="F:L-malate dehydrogenase (quinone) activity"/>
    <property type="evidence" value="ECO:0007669"/>
    <property type="project" value="UniProtKB-UniRule"/>
</dbReference>
<dbReference type="GO" id="GO:0006099">
    <property type="term" value="P:tricarboxylic acid cycle"/>
    <property type="evidence" value="ECO:0007669"/>
    <property type="project" value="UniProtKB-UniRule"/>
</dbReference>
<dbReference type="HAMAP" id="MF_00212">
    <property type="entry name" value="MQO"/>
    <property type="match status" value="1"/>
</dbReference>
<dbReference type="InterPro" id="IPR036188">
    <property type="entry name" value="FAD/NAD-bd_sf"/>
</dbReference>
<dbReference type="InterPro" id="IPR006231">
    <property type="entry name" value="MQO"/>
</dbReference>
<dbReference type="NCBIfam" id="TIGR01320">
    <property type="entry name" value="mal_quin_oxido"/>
    <property type="match status" value="1"/>
</dbReference>
<dbReference type="NCBIfam" id="NF003603">
    <property type="entry name" value="PRK05257.1-1"/>
    <property type="match status" value="1"/>
</dbReference>
<dbReference type="NCBIfam" id="NF003605">
    <property type="entry name" value="PRK05257.1-4"/>
    <property type="match status" value="1"/>
</dbReference>
<dbReference type="NCBIfam" id="NF003606">
    <property type="entry name" value="PRK05257.2-1"/>
    <property type="match status" value="1"/>
</dbReference>
<dbReference type="NCBIfam" id="NF003611">
    <property type="entry name" value="PRK05257.3-2"/>
    <property type="match status" value="1"/>
</dbReference>
<dbReference type="NCBIfam" id="NF009875">
    <property type="entry name" value="PRK13339.1"/>
    <property type="match status" value="1"/>
</dbReference>
<dbReference type="PANTHER" id="PTHR43104">
    <property type="entry name" value="L-2-HYDROXYGLUTARATE DEHYDROGENASE, MITOCHONDRIAL"/>
    <property type="match status" value="1"/>
</dbReference>
<dbReference type="PANTHER" id="PTHR43104:SF2">
    <property type="entry name" value="L-2-HYDROXYGLUTARATE DEHYDROGENASE, MITOCHONDRIAL"/>
    <property type="match status" value="1"/>
</dbReference>
<dbReference type="Pfam" id="PF06039">
    <property type="entry name" value="Mqo"/>
    <property type="match status" value="1"/>
</dbReference>
<dbReference type="SUPFAM" id="SSF51905">
    <property type="entry name" value="FAD/NAD(P)-binding domain"/>
    <property type="match status" value="1"/>
</dbReference>
<organism>
    <name type="scientific">Acinetobacter baumannii (strain ATCC 17978 / DSM 105126 / CIP 53.77 / LMG 1025 / NCDC KC755 / 5377)</name>
    <dbReference type="NCBI Taxonomy" id="400667"/>
    <lineage>
        <taxon>Bacteria</taxon>
        <taxon>Pseudomonadati</taxon>
        <taxon>Pseudomonadota</taxon>
        <taxon>Gammaproteobacteria</taxon>
        <taxon>Moraxellales</taxon>
        <taxon>Moraxellaceae</taxon>
        <taxon>Acinetobacter</taxon>
        <taxon>Acinetobacter calcoaceticus/baumannii complex</taxon>
    </lineage>
</organism>